<gene>
    <name evidence="1" type="primary">rplI</name>
    <name type="ordered locus">SAB0015</name>
</gene>
<protein>
    <recommendedName>
        <fullName evidence="1">Large ribosomal subunit protein bL9</fullName>
    </recommendedName>
    <alternativeName>
        <fullName evidence="2">50S ribosomal protein L9</fullName>
    </alternativeName>
</protein>
<organism>
    <name type="scientific">Staphylococcus aureus (strain bovine RF122 / ET3-1)</name>
    <dbReference type="NCBI Taxonomy" id="273036"/>
    <lineage>
        <taxon>Bacteria</taxon>
        <taxon>Bacillati</taxon>
        <taxon>Bacillota</taxon>
        <taxon>Bacilli</taxon>
        <taxon>Bacillales</taxon>
        <taxon>Staphylococcaceae</taxon>
        <taxon>Staphylococcus</taxon>
    </lineage>
</organism>
<dbReference type="EMBL" id="AJ938182">
    <property type="protein sequence ID" value="CAI79703.1"/>
    <property type="molecule type" value="Genomic_DNA"/>
</dbReference>
<dbReference type="RefSeq" id="WP_000864306.1">
    <property type="nucleotide sequence ID" value="NC_007622.1"/>
</dbReference>
<dbReference type="SMR" id="Q2YUQ6"/>
<dbReference type="KEGG" id="sab:SAB0015"/>
<dbReference type="HOGENOM" id="CLU_078938_3_2_9"/>
<dbReference type="GO" id="GO:1990904">
    <property type="term" value="C:ribonucleoprotein complex"/>
    <property type="evidence" value="ECO:0007669"/>
    <property type="project" value="UniProtKB-KW"/>
</dbReference>
<dbReference type="GO" id="GO:0005840">
    <property type="term" value="C:ribosome"/>
    <property type="evidence" value="ECO:0007669"/>
    <property type="project" value="UniProtKB-KW"/>
</dbReference>
<dbReference type="GO" id="GO:0019843">
    <property type="term" value="F:rRNA binding"/>
    <property type="evidence" value="ECO:0007669"/>
    <property type="project" value="UniProtKB-UniRule"/>
</dbReference>
<dbReference type="GO" id="GO:0003735">
    <property type="term" value="F:structural constituent of ribosome"/>
    <property type="evidence" value="ECO:0007669"/>
    <property type="project" value="InterPro"/>
</dbReference>
<dbReference type="GO" id="GO:0006412">
    <property type="term" value="P:translation"/>
    <property type="evidence" value="ECO:0007669"/>
    <property type="project" value="UniProtKB-UniRule"/>
</dbReference>
<dbReference type="FunFam" id="3.10.430.100:FF:000002">
    <property type="entry name" value="50S ribosomal protein L9"/>
    <property type="match status" value="1"/>
</dbReference>
<dbReference type="FunFam" id="3.40.5.10:FF:000002">
    <property type="entry name" value="50S ribosomal protein L9"/>
    <property type="match status" value="1"/>
</dbReference>
<dbReference type="Gene3D" id="3.10.430.100">
    <property type="entry name" value="Ribosomal protein L9, C-terminal domain"/>
    <property type="match status" value="1"/>
</dbReference>
<dbReference type="Gene3D" id="3.40.5.10">
    <property type="entry name" value="Ribosomal protein L9, N-terminal domain"/>
    <property type="match status" value="1"/>
</dbReference>
<dbReference type="HAMAP" id="MF_00503">
    <property type="entry name" value="Ribosomal_bL9"/>
    <property type="match status" value="1"/>
</dbReference>
<dbReference type="InterPro" id="IPR000244">
    <property type="entry name" value="Ribosomal_bL9"/>
</dbReference>
<dbReference type="InterPro" id="IPR009027">
    <property type="entry name" value="Ribosomal_bL9/RNase_H1_N"/>
</dbReference>
<dbReference type="InterPro" id="IPR020594">
    <property type="entry name" value="Ribosomal_bL9_bac/chp"/>
</dbReference>
<dbReference type="InterPro" id="IPR020069">
    <property type="entry name" value="Ribosomal_bL9_C"/>
</dbReference>
<dbReference type="InterPro" id="IPR036791">
    <property type="entry name" value="Ribosomal_bL9_C_sf"/>
</dbReference>
<dbReference type="InterPro" id="IPR020070">
    <property type="entry name" value="Ribosomal_bL9_N"/>
</dbReference>
<dbReference type="InterPro" id="IPR036935">
    <property type="entry name" value="Ribosomal_bL9_N_sf"/>
</dbReference>
<dbReference type="NCBIfam" id="TIGR00158">
    <property type="entry name" value="L9"/>
    <property type="match status" value="1"/>
</dbReference>
<dbReference type="PANTHER" id="PTHR21368">
    <property type="entry name" value="50S RIBOSOMAL PROTEIN L9"/>
    <property type="match status" value="1"/>
</dbReference>
<dbReference type="Pfam" id="PF03948">
    <property type="entry name" value="Ribosomal_L9_C"/>
    <property type="match status" value="1"/>
</dbReference>
<dbReference type="Pfam" id="PF01281">
    <property type="entry name" value="Ribosomal_L9_N"/>
    <property type="match status" value="1"/>
</dbReference>
<dbReference type="SUPFAM" id="SSF55658">
    <property type="entry name" value="L9 N-domain-like"/>
    <property type="match status" value="1"/>
</dbReference>
<dbReference type="SUPFAM" id="SSF55653">
    <property type="entry name" value="Ribosomal protein L9 C-domain"/>
    <property type="match status" value="1"/>
</dbReference>
<dbReference type="PROSITE" id="PS00651">
    <property type="entry name" value="RIBOSOMAL_L9"/>
    <property type="match status" value="1"/>
</dbReference>
<comment type="function">
    <text evidence="1">Binds to the 23S rRNA.</text>
</comment>
<comment type="similarity">
    <text evidence="1">Belongs to the bacterial ribosomal protein bL9 family.</text>
</comment>
<accession>Q2YUQ6</accession>
<feature type="chain" id="PRO_0000236590" description="Large ribosomal subunit protein bL9">
    <location>
        <begin position="1"/>
        <end position="148"/>
    </location>
</feature>
<proteinExistence type="inferred from homology"/>
<name>RL9_STAAB</name>
<evidence type="ECO:0000255" key="1">
    <source>
        <dbReference type="HAMAP-Rule" id="MF_00503"/>
    </source>
</evidence>
<evidence type="ECO:0000305" key="2"/>
<keyword id="KW-0687">Ribonucleoprotein</keyword>
<keyword id="KW-0689">Ribosomal protein</keyword>
<keyword id="KW-0694">RNA-binding</keyword>
<keyword id="KW-0699">rRNA-binding</keyword>
<reference key="1">
    <citation type="journal article" date="2007" name="PLoS ONE">
        <title>Molecular correlates of host specialization in Staphylococcus aureus.</title>
        <authorList>
            <person name="Herron-Olson L."/>
            <person name="Fitzgerald J.R."/>
            <person name="Musser J.M."/>
            <person name="Kapur V."/>
        </authorList>
    </citation>
    <scope>NUCLEOTIDE SEQUENCE [LARGE SCALE GENOMIC DNA]</scope>
    <source>
        <strain>bovine RF122 / ET3-1</strain>
    </source>
</reference>
<sequence>MKVIFTQDVKGKGKKGEVKEVPVGYANNFLLKKNYAVEATPGNLKQLELQKKRAKQERQQEIEDAKALKETLSNIEVEVSAKTGEGGKLFGSVSTKQIAEALKTQHDIKIDKRKMDLPNGIHSLGYTNVPVKLDKEVEGTIRVHTVEQ</sequence>